<proteinExistence type="inferred from homology"/>
<reference key="1">
    <citation type="journal article" date="2009" name="BMC Genomics">
        <title>Complete genome sequence of the sugarcane nitrogen-fixing endophyte Gluconacetobacter diazotrophicus Pal5.</title>
        <authorList>
            <person name="Bertalan M."/>
            <person name="Albano R."/>
            <person name="de Padua V."/>
            <person name="Rouws L."/>
            <person name="Rojas C."/>
            <person name="Hemerly A."/>
            <person name="Teixeira K."/>
            <person name="Schwab S."/>
            <person name="Araujo J."/>
            <person name="Oliveira A."/>
            <person name="Franca L."/>
            <person name="Magalhaes V."/>
            <person name="Alqueres S."/>
            <person name="Cardoso A."/>
            <person name="Almeida W."/>
            <person name="Loureiro M.M."/>
            <person name="Nogueira E."/>
            <person name="Cidade D."/>
            <person name="Oliveira D."/>
            <person name="Simao T."/>
            <person name="Macedo J."/>
            <person name="Valadao A."/>
            <person name="Dreschsel M."/>
            <person name="Freitas F."/>
            <person name="Vidal M."/>
            <person name="Guedes H."/>
            <person name="Rodrigues E."/>
            <person name="Meneses C."/>
            <person name="Brioso P."/>
            <person name="Pozzer L."/>
            <person name="Figueiredo D."/>
            <person name="Montano H."/>
            <person name="Junior J."/>
            <person name="de Souza Filho G."/>
            <person name="Martin Quintana Flores V."/>
            <person name="Ferreira B."/>
            <person name="Branco A."/>
            <person name="Gonzalez P."/>
            <person name="Guillobel H."/>
            <person name="Lemos M."/>
            <person name="Seibel L."/>
            <person name="Macedo J."/>
            <person name="Alves-Ferreira M."/>
            <person name="Sachetto-Martins G."/>
            <person name="Coelho A."/>
            <person name="Santos E."/>
            <person name="Amaral G."/>
            <person name="Neves A."/>
            <person name="Pacheco A.B."/>
            <person name="Carvalho D."/>
            <person name="Lery L."/>
            <person name="Bisch P."/>
            <person name="Rossle S.C."/>
            <person name="Urmenyi T."/>
            <person name="Rael Pereira A."/>
            <person name="Silva R."/>
            <person name="Rondinelli E."/>
            <person name="von Kruger W."/>
            <person name="Martins O."/>
            <person name="Baldani J.I."/>
            <person name="Ferreira P.C."/>
        </authorList>
    </citation>
    <scope>NUCLEOTIDE SEQUENCE [LARGE SCALE GENOMIC DNA]</scope>
    <source>
        <strain>ATCC 49037 / DSM 5601 / CCUG 37298 / CIP 103539 / LMG 7603 / PAl5</strain>
    </source>
</reference>
<reference key="2">
    <citation type="journal article" date="2010" name="Stand. Genomic Sci.">
        <title>Two genome sequences of the same bacterial strain, Gluconacetobacter diazotrophicus PAl 5, suggest a new standard in genome sequence submission.</title>
        <authorList>
            <person name="Giongo A."/>
            <person name="Tyler H.L."/>
            <person name="Zipperer U.N."/>
            <person name="Triplett E.W."/>
        </authorList>
    </citation>
    <scope>NUCLEOTIDE SEQUENCE [LARGE SCALE GENOMIC DNA]</scope>
    <source>
        <strain>ATCC 49037 / DSM 5601 / CCUG 37298 / CIP 103539 / LMG 7603 / PAl5</strain>
    </source>
</reference>
<feature type="chain" id="PRO_1000077360" description="Threonine--tRNA ligase">
    <location>
        <begin position="1"/>
        <end position="641"/>
    </location>
</feature>
<feature type="domain" description="TGS" evidence="2">
    <location>
        <begin position="1"/>
        <end position="61"/>
    </location>
</feature>
<feature type="region of interest" description="Catalytic" evidence="1">
    <location>
        <begin position="243"/>
        <end position="536"/>
    </location>
</feature>
<feature type="binding site" evidence="1">
    <location>
        <position position="336"/>
    </location>
    <ligand>
        <name>Zn(2+)</name>
        <dbReference type="ChEBI" id="CHEBI:29105"/>
    </ligand>
</feature>
<feature type="binding site" evidence="1">
    <location>
        <position position="387"/>
    </location>
    <ligand>
        <name>Zn(2+)</name>
        <dbReference type="ChEBI" id="CHEBI:29105"/>
    </ligand>
</feature>
<feature type="binding site" evidence="1">
    <location>
        <position position="513"/>
    </location>
    <ligand>
        <name>Zn(2+)</name>
        <dbReference type="ChEBI" id="CHEBI:29105"/>
    </ligand>
</feature>
<keyword id="KW-0030">Aminoacyl-tRNA synthetase</keyword>
<keyword id="KW-0067">ATP-binding</keyword>
<keyword id="KW-0963">Cytoplasm</keyword>
<keyword id="KW-0436">Ligase</keyword>
<keyword id="KW-0479">Metal-binding</keyword>
<keyword id="KW-0547">Nucleotide-binding</keyword>
<keyword id="KW-0648">Protein biosynthesis</keyword>
<keyword id="KW-1185">Reference proteome</keyword>
<keyword id="KW-0694">RNA-binding</keyword>
<keyword id="KW-0820">tRNA-binding</keyword>
<keyword id="KW-0862">Zinc</keyword>
<comment type="function">
    <text evidence="1">Catalyzes the attachment of threonine to tRNA(Thr) in a two-step reaction: L-threonine is first activated by ATP to form Thr-AMP and then transferred to the acceptor end of tRNA(Thr). Also edits incorrectly charged L-seryl-tRNA(Thr).</text>
</comment>
<comment type="catalytic activity">
    <reaction evidence="1">
        <text>tRNA(Thr) + L-threonine + ATP = L-threonyl-tRNA(Thr) + AMP + diphosphate + H(+)</text>
        <dbReference type="Rhea" id="RHEA:24624"/>
        <dbReference type="Rhea" id="RHEA-COMP:9670"/>
        <dbReference type="Rhea" id="RHEA-COMP:9704"/>
        <dbReference type="ChEBI" id="CHEBI:15378"/>
        <dbReference type="ChEBI" id="CHEBI:30616"/>
        <dbReference type="ChEBI" id="CHEBI:33019"/>
        <dbReference type="ChEBI" id="CHEBI:57926"/>
        <dbReference type="ChEBI" id="CHEBI:78442"/>
        <dbReference type="ChEBI" id="CHEBI:78534"/>
        <dbReference type="ChEBI" id="CHEBI:456215"/>
        <dbReference type="EC" id="6.1.1.3"/>
    </reaction>
</comment>
<comment type="cofactor">
    <cofactor evidence="1">
        <name>Zn(2+)</name>
        <dbReference type="ChEBI" id="CHEBI:29105"/>
    </cofactor>
    <text evidence="1">Binds 1 zinc ion per subunit.</text>
</comment>
<comment type="subunit">
    <text evidence="1">Homodimer.</text>
</comment>
<comment type="subcellular location">
    <subcellularLocation>
        <location evidence="1">Cytoplasm</location>
    </subcellularLocation>
</comment>
<comment type="similarity">
    <text evidence="1">Belongs to the class-II aminoacyl-tRNA synthetase family.</text>
</comment>
<name>SYT_GLUDA</name>
<accession>A9HFP5</accession>
<accession>B5ZE23</accession>
<organism>
    <name type="scientific">Gluconacetobacter diazotrophicus (strain ATCC 49037 / DSM 5601 / CCUG 37298 / CIP 103539 / LMG 7603 / PAl5)</name>
    <dbReference type="NCBI Taxonomy" id="272568"/>
    <lineage>
        <taxon>Bacteria</taxon>
        <taxon>Pseudomonadati</taxon>
        <taxon>Pseudomonadota</taxon>
        <taxon>Alphaproteobacteria</taxon>
        <taxon>Acetobacterales</taxon>
        <taxon>Acetobacteraceae</taxon>
        <taxon>Gluconacetobacter</taxon>
    </lineage>
</organism>
<evidence type="ECO:0000255" key="1">
    <source>
        <dbReference type="HAMAP-Rule" id="MF_00184"/>
    </source>
</evidence>
<evidence type="ECO:0000255" key="2">
    <source>
        <dbReference type="PROSITE-ProRule" id="PRU01228"/>
    </source>
</evidence>
<gene>
    <name evidence="1" type="primary">thrS</name>
    <name type="ordered locus">GDI1448</name>
    <name type="ordered locus">Gdia_2149</name>
</gene>
<sequence length="641" mass="72653">MPAITLPDGSVRRFDGPVTGTMVAESIGPGLARAALAMEVDGALVDLSREIADDASVRFITRKDDAALEMIRHDTAHVLAEAVQSLWPGTQVTIGPSIENGFYYDFYRNEPFTPEDFPAIEARMREIVAANARFEREVWPRDEAIRFFENRGERFKAELIRDLPESEPISIYRQGEWLDLCRGPHLRGTADVGSAFKLMKVAGAYWRGDHRNPMLTRIYGTAWRDQKELDAHLHRLEEAERRDHRRIGREMDLFHIQEEAVGSIFWHPKGWRLYTALQDYMRRAQTRGGYQEVRTPQLVDRALWEASGHWDKYREHMFIATVEDEDKTLALKPMNCPCHVQIFRHGLRSYRELPLRMAEFGACHRYEPSGALHGIMRVRSFTQDDAHIFCTESQIAAETARFVRMLAEVYADLGFESFRVKFADRPEQRAGSDETWDRAEGALIEACRLAGVEYEYNPGEGAFYGPKLEFVLRDAIGRDWQCGTLQVDYVLPERLDASFVGEDSARHRPVMLHRAILGSFERFLGILIEQHAGRFPLWLAPVQVVVASIVTDAAPYAEQVAETLTQAGLVVETDIRNEKINAKVREHSLARVPVILVVGRKEAEDGTVAIRRLGGAAQEVMSLADAATALAAEALPPDLRR</sequence>
<dbReference type="EC" id="6.1.1.3" evidence="1"/>
<dbReference type="EMBL" id="AM889285">
    <property type="protein sequence ID" value="CAP55391.1"/>
    <property type="molecule type" value="Genomic_DNA"/>
</dbReference>
<dbReference type="EMBL" id="CP001189">
    <property type="protein sequence ID" value="ACI51907.1"/>
    <property type="molecule type" value="Genomic_DNA"/>
</dbReference>
<dbReference type="RefSeq" id="WP_012224745.1">
    <property type="nucleotide sequence ID" value="NC_010125.1"/>
</dbReference>
<dbReference type="SMR" id="A9HFP5"/>
<dbReference type="STRING" id="272568.GDI1448"/>
<dbReference type="KEGG" id="gdi:GDI1448"/>
<dbReference type="KEGG" id="gdj:Gdia_2149"/>
<dbReference type="eggNOG" id="COG0441">
    <property type="taxonomic scope" value="Bacteria"/>
</dbReference>
<dbReference type="HOGENOM" id="CLU_008554_0_1_5"/>
<dbReference type="OrthoDB" id="9802304at2"/>
<dbReference type="Proteomes" id="UP000001176">
    <property type="component" value="Chromosome"/>
</dbReference>
<dbReference type="GO" id="GO:0005829">
    <property type="term" value="C:cytosol"/>
    <property type="evidence" value="ECO:0007669"/>
    <property type="project" value="TreeGrafter"/>
</dbReference>
<dbReference type="GO" id="GO:0005524">
    <property type="term" value="F:ATP binding"/>
    <property type="evidence" value="ECO:0007669"/>
    <property type="project" value="UniProtKB-UniRule"/>
</dbReference>
<dbReference type="GO" id="GO:0046872">
    <property type="term" value="F:metal ion binding"/>
    <property type="evidence" value="ECO:0007669"/>
    <property type="project" value="UniProtKB-KW"/>
</dbReference>
<dbReference type="GO" id="GO:0004829">
    <property type="term" value="F:threonine-tRNA ligase activity"/>
    <property type="evidence" value="ECO:0007669"/>
    <property type="project" value="UniProtKB-UniRule"/>
</dbReference>
<dbReference type="GO" id="GO:0000049">
    <property type="term" value="F:tRNA binding"/>
    <property type="evidence" value="ECO:0007669"/>
    <property type="project" value="UniProtKB-KW"/>
</dbReference>
<dbReference type="GO" id="GO:0006435">
    <property type="term" value="P:threonyl-tRNA aminoacylation"/>
    <property type="evidence" value="ECO:0007669"/>
    <property type="project" value="UniProtKB-UniRule"/>
</dbReference>
<dbReference type="CDD" id="cd01667">
    <property type="entry name" value="TGS_ThrRS"/>
    <property type="match status" value="1"/>
</dbReference>
<dbReference type="CDD" id="cd00860">
    <property type="entry name" value="ThrRS_anticodon"/>
    <property type="match status" value="1"/>
</dbReference>
<dbReference type="CDD" id="cd00771">
    <property type="entry name" value="ThrRS_core"/>
    <property type="match status" value="1"/>
</dbReference>
<dbReference type="FunFam" id="3.10.20.30:FF:000005">
    <property type="entry name" value="Threonine--tRNA ligase"/>
    <property type="match status" value="1"/>
</dbReference>
<dbReference type="FunFam" id="3.30.54.20:FF:000002">
    <property type="entry name" value="Threonine--tRNA ligase"/>
    <property type="match status" value="1"/>
</dbReference>
<dbReference type="FunFam" id="3.30.930.10:FF:000002">
    <property type="entry name" value="Threonine--tRNA ligase"/>
    <property type="match status" value="1"/>
</dbReference>
<dbReference type="FunFam" id="3.40.50.800:FF:000001">
    <property type="entry name" value="Threonine--tRNA ligase"/>
    <property type="match status" value="1"/>
</dbReference>
<dbReference type="FunFam" id="3.30.980.10:FF:000005">
    <property type="entry name" value="Threonyl-tRNA synthetase, mitochondrial"/>
    <property type="match status" value="1"/>
</dbReference>
<dbReference type="Gene3D" id="3.10.20.30">
    <property type="match status" value="1"/>
</dbReference>
<dbReference type="Gene3D" id="3.30.54.20">
    <property type="match status" value="1"/>
</dbReference>
<dbReference type="Gene3D" id="3.40.50.800">
    <property type="entry name" value="Anticodon-binding domain"/>
    <property type="match status" value="1"/>
</dbReference>
<dbReference type="Gene3D" id="3.30.930.10">
    <property type="entry name" value="Bira Bifunctional Protein, Domain 2"/>
    <property type="match status" value="1"/>
</dbReference>
<dbReference type="Gene3D" id="3.30.980.10">
    <property type="entry name" value="Threonyl-trna Synthetase, Chain A, domain 2"/>
    <property type="match status" value="1"/>
</dbReference>
<dbReference type="HAMAP" id="MF_00184">
    <property type="entry name" value="Thr_tRNA_synth"/>
    <property type="match status" value="1"/>
</dbReference>
<dbReference type="InterPro" id="IPR002314">
    <property type="entry name" value="aa-tRNA-synt_IIb"/>
</dbReference>
<dbReference type="InterPro" id="IPR006195">
    <property type="entry name" value="aa-tRNA-synth_II"/>
</dbReference>
<dbReference type="InterPro" id="IPR045864">
    <property type="entry name" value="aa-tRNA-synth_II/BPL/LPL"/>
</dbReference>
<dbReference type="InterPro" id="IPR004154">
    <property type="entry name" value="Anticodon-bd"/>
</dbReference>
<dbReference type="InterPro" id="IPR036621">
    <property type="entry name" value="Anticodon-bd_dom_sf"/>
</dbReference>
<dbReference type="InterPro" id="IPR012675">
    <property type="entry name" value="Beta-grasp_dom_sf"/>
</dbReference>
<dbReference type="InterPro" id="IPR004095">
    <property type="entry name" value="TGS"/>
</dbReference>
<dbReference type="InterPro" id="IPR012676">
    <property type="entry name" value="TGS-like"/>
</dbReference>
<dbReference type="InterPro" id="IPR002320">
    <property type="entry name" value="Thr-tRNA-ligase_IIa"/>
</dbReference>
<dbReference type="InterPro" id="IPR018163">
    <property type="entry name" value="Thr/Ala-tRNA-synth_IIc_edit"/>
</dbReference>
<dbReference type="InterPro" id="IPR047246">
    <property type="entry name" value="ThrRS_anticodon"/>
</dbReference>
<dbReference type="InterPro" id="IPR033728">
    <property type="entry name" value="ThrRS_core"/>
</dbReference>
<dbReference type="InterPro" id="IPR012947">
    <property type="entry name" value="tRNA_SAD"/>
</dbReference>
<dbReference type="NCBIfam" id="TIGR00418">
    <property type="entry name" value="thrS"/>
    <property type="match status" value="1"/>
</dbReference>
<dbReference type="PANTHER" id="PTHR11451:SF44">
    <property type="entry name" value="THREONINE--TRNA LIGASE, CHLOROPLASTIC_MITOCHONDRIAL 2"/>
    <property type="match status" value="1"/>
</dbReference>
<dbReference type="PANTHER" id="PTHR11451">
    <property type="entry name" value="THREONINE-TRNA LIGASE"/>
    <property type="match status" value="1"/>
</dbReference>
<dbReference type="Pfam" id="PF03129">
    <property type="entry name" value="HGTP_anticodon"/>
    <property type="match status" value="1"/>
</dbReference>
<dbReference type="Pfam" id="PF02824">
    <property type="entry name" value="TGS"/>
    <property type="match status" value="1"/>
</dbReference>
<dbReference type="Pfam" id="PF00587">
    <property type="entry name" value="tRNA-synt_2b"/>
    <property type="match status" value="1"/>
</dbReference>
<dbReference type="Pfam" id="PF07973">
    <property type="entry name" value="tRNA_SAD"/>
    <property type="match status" value="1"/>
</dbReference>
<dbReference type="PRINTS" id="PR01047">
    <property type="entry name" value="TRNASYNTHTHR"/>
</dbReference>
<dbReference type="SMART" id="SM00863">
    <property type="entry name" value="tRNA_SAD"/>
    <property type="match status" value="1"/>
</dbReference>
<dbReference type="SUPFAM" id="SSF52954">
    <property type="entry name" value="Class II aaRS ABD-related"/>
    <property type="match status" value="1"/>
</dbReference>
<dbReference type="SUPFAM" id="SSF55681">
    <property type="entry name" value="Class II aaRS and biotin synthetases"/>
    <property type="match status" value="1"/>
</dbReference>
<dbReference type="SUPFAM" id="SSF81271">
    <property type="entry name" value="TGS-like"/>
    <property type="match status" value="1"/>
</dbReference>
<dbReference type="SUPFAM" id="SSF55186">
    <property type="entry name" value="ThrRS/AlaRS common domain"/>
    <property type="match status" value="1"/>
</dbReference>
<dbReference type="PROSITE" id="PS50862">
    <property type="entry name" value="AA_TRNA_LIGASE_II"/>
    <property type="match status" value="1"/>
</dbReference>
<dbReference type="PROSITE" id="PS51880">
    <property type="entry name" value="TGS"/>
    <property type="match status" value="1"/>
</dbReference>
<protein>
    <recommendedName>
        <fullName evidence="1">Threonine--tRNA ligase</fullName>
        <ecNumber evidence="1">6.1.1.3</ecNumber>
    </recommendedName>
    <alternativeName>
        <fullName evidence="1">Threonyl-tRNA synthetase</fullName>
        <shortName evidence="1">ThrRS</shortName>
    </alternativeName>
</protein>